<sequence length="418" mass="45950">MALAKKTIKKVVLAYSGGLDTSAIIPWLKENYDGCEVIAFCADVGQGDEELEGVKEKAIASGASECYVVDLKEEYVKEYIYPILKTGSVYEGQYLLGTSMARPIIAKAHIEVALKVGADAVCHGCTGKGNDQVRFESCFAALAPELTVIAPWREWDMVSREDLLDYLAERNIPCAASLTKIYSRDANAWHISHEGGELEDPWCEPSKEVWTMTVDPMDAPDVPEKVQLSFKEGELVGIDGKDFSQHGAGAYEALMYLNEKGSAHGVGRIDIVENRLVGMKSRGCYETPGGTILMAAYKGLETLILDKESLKYRESVGLEFSHVIYDGRWFTPLAKAQLASAASFAEKLTGDVVVKLYKGMAQVIQRRSPNSLYSEAFATFGADDVYDQKHAEGFIRLFSLSSRITALSQKDSLKDKAE</sequence>
<dbReference type="EC" id="6.3.4.5" evidence="1"/>
<dbReference type="EMBL" id="CP000083">
    <property type="protein sequence ID" value="AAZ24202.1"/>
    <property type="molecule type" value="Genomic_DNA"/>
</dbReference>
<dbReference type="RefSeq" id="WP_011041324.1">
    <property type="nucleotide sequence ID" value="NC_003910.7"/>
</dbReference>
<dbReference type="SMR" id="Q489P3"/>
<dbReference type="STRING" id="167879.CPS_0463"/>
<dbReference type="KEGG" id="cps:CPS_0463"/>
<dbReference type="eggNOG" id="COG0137">
    <property type="taxonomic scope" value="Bacteria"/>
</dbReference>
<dbReference type="HOGENOM" id="CLU_032784_4_2_6"/>
<dbReference type="UniPathway" id="UPA00068">
    <property type="reaction ID" value="UER00113"/>
</dbReference>
<dbReference type="Proteomes" id="UP000000547">
    <property type="component" value="Chromosome"/>
</dbReference>
<dbReference type="GO" id="GO:0005737">
    <property type="term" value="C:cytoplasm"/>
    <property type="evidence" value="ECO:0007669"/>
    <property type="project" value="UniProtKB-SubCell"/>
</dbReference>
<dbReference type="GO" id="GO:0004055">
    <property type="term" value="F:argininosuccinate synthase activity"/>
    <property type="evidence" value="ECO:0007669"/>
    <property type="project" value="UniProtKB-UniRule"/>
</dbReference>
<dbReference type="GO" id="GO:0005524">
    <property type="term" value="F:ATP binding"/>
    <property type="evidence" value="ECO:0007669"/>
    <property type="project" value="UniProtKB-UniRule"/>
</dbReference>
<dbReference type="GO" id="GO:0000053">
    <property type="term" value="P:argininosuccinate metabolic process"/>
    <property type="evidence" value="ECO:0007669"/>
    <property type="project" value="TreeGrafter"/>
</dbReference>
<dbReference type="GO" id="GO:0006526">
    <property type="term" value="P:L-arginine biosynthetic process"/>
    <property type="evidence" value="ECO:0007669"/>
    <property type="project" value="UniProtKB-UniRule"/>
</dbReference>
<dbReference type="GO" id="GO:0000050">
    <property type="term" value="P:urea cycle"/>
    <property type="evidence" value="ECO:0007669"/>
    <property type="project" value="TreeGrafter"/>
</dbReference>
<dbReference type="CDD" id="cd01999">
    <property type="entry name" value="ASS"/>
    <property type="match status" value="1"/>
</dbReference>
<dbReference type="FunFam" id="3.40.50.620:FF:000019">
    <property type="entry name" value="Argininosuccinate synthase"/>
    <property type="match status" value="1"/>
</dbReference>
<dbReference type="FunFam" id="3.90.1260.10:FF:000007">
    <property type="entry name" value="Argininosuccinate synthase"/>
    <property type="match status" value="1"/>
</dbReference>
<dbReference type="Gene3D" id="3.90.1260.10">
    <property type="entry name" value="Argininosuccinate synthetase, chain A, domain 2"/>
    <property type="match status" value="1"/>
</dbReference>
<dbReference type="Gene3D" id="3.40.50.620">
    <property type="entry name" value="HUPs"/>
    <property type="match status" value="1"/>
</dbReference>
<dbReference type="Gene3D" id="1.20.5.470">
    <property type="entry name" value="Single helix bin"/>
    <property type="match status" value="1"/>
</dbReference>
<dbReference type="HAMAP" id="MF_00005">
    <property type="entry name" value="Arg_succ_synth_type1"/>
    <property type="match status" value="1"/>
</dbReference>
<dbReference type="InterPro" id="IPR048268">
    <property type="entry name" value="Arginosuc_syn_C"/>
</dbReference>
<dbReference type="InterPro" id="IPR048267">
    <property type="entry name" value="Arginosuc_syn_N"/>
</dbReference>
<dbReference type="InterPro" id="IPR001518">
    <property type="entry name" value="Arginosuc_synth"/>
</dbReference>
<dbReference type="InterPro" id="IPR018223">
    <property type="entry name" value="Arginosuc_synth_CS"/>
</dbReference>
<dbReference type="InterPro" id="IPR023434">
    <property type="entry name" value="Arginosuc_synth_type_1_subfam"/>
</dbReference>
<dbReference type="InterPro" id="IPR024074">
    <property type="entry name" value="AS_cat/multimer_dom_body"/>
</dbReference>
<dbReference type="InterPro" id="IPR014729">
    <property type="entry name" value="Rossmann-like_a/b/a_fold"/>
</dbReference>
<dbReference type="NCBIfam" id="TIGR00032">
    <property type="entry name" value="argG"/>
    <property type="match status" value="1"/>
</dbReference>
<dbReference type="NCBIfam" id="NF001770">
    <property type="entry name" value="PRK00509.1"/>
    <property type="match status" value="1"/>
</dbReference>
<dbReference type="PANTHER" id="PTHR11587">
    <property type="entry name" value="ARGININOSUCCINATE SYNTHASE"/>
    <property type="match status" value="1"/>
</dbReference>
<dbReference type="PANTHER" id="PTHR11587:SF2">
    <property type="entry name" value="ARGININOSUCCINATE SYNTHASE"/>
    <property type="match status" value="1"/>
</dbReference>
<dbReference type="Pfam" id="PF20979">
    <property type="entry name" value="Arginosuc_syn_C"/>
    <property type="match status" value="1"/>
</dbReference>
<dbReference type="Pfam" id="PF00764">
    <property type="entry name" value="Arginosuc_synth"/>
    <property type="match status" value="1"/>
</dbReference>
<dbReference type="SUPFAM" id="SSF52402">
    <property type="entry name" value="Adenine nucleotide alpha hydrolases-like"/>
    <property type="match status" value="1"/>
</dbReference>
<dbReference type="SUPFAM" id="SSF69864">
    <property type="entry name" value="Argininosuccinate synthetase, C-terminal domain"/>
    <property type="match status" value="1"/>
</dbReference>
<dbReference type="PROSITE" id="PS00564">
    <property type="entry name" value="ARGININOSUCCIN_SYN_1"/>
    <property type="match status" value="1"/>
</dbReference>
<dbReference type="PROSITE" id="PS00565">
    <property type="entry name" value="ARGININOSUCCIN_SYN_2"/>
    <property type="match status" value="1"/>
</dbReference>
<accession>Q489P3</accession>
<comment type="catalytic activity">
    <reaction evidence="1">
        <text>L-citrulline + L-aspartate + ATP = 2-(N(omega)-L-arginino)succinate + AMP + diphosphate + H(+)</text>
        <dbReference type="Rhea" id="RHEA:10932"/>
        <dbReference type="ChEBI" id="CHEBI:15378"/>
        <dbReference type="ChEBI" id="CHEBI:29991"/>
        <dbReference type="ChEBI" id="CHEBI:30616"/>
        <dbReference type="ChEBI" id="CHEBI:33019"/>
        <dbReference type="ChEBI" id="CHEBI:57472"/>
        <dbReference type="ChEBI" id="CHEBI:57743"/>
        <dbReference type="ChEBI" id="CHEBI:456215"/>
        <dbReference type="EC" id="6.3.4.5"/>
    </reaction>
</comment>
<comment type="pathway">
    <text evidence="1">Amino-acid biosynthesis; L-arginine biosynthesis; L-arginine from L-ornithine and carbamoyl phosphate: step 2/3.</text>
</comment>
<comment type="subunit">
    <text evidence="1">Homotetramer.</text>
</comment>
<comment type="subcellular location">
    <subcellularLocation>
        <location evidence="1">Cytoplasm</location>
    </subcellularLocation>
</comment>
<comment type="similarity">
    <text evidence="1">Belongs to the argininosuccinate synthase family. Type 1 subfamily.</text>
</comment>
<proteinExistence type="inferred from homology"/>
<reference key="1">
    <citation type="journal article" date="2005" name="Proc. Natl. Acad. Sci. U.S.A.">
        <title>The psychrophilic lifestyle as revealed by the genome sequence of Colwellia psychrerythraea 34H through genomic and proteomic analyses.</title>
        <authorList>
            <person name="Methe B.A."/>
            <person name="Nelson K.E."/>
            <person name="Deming J.W."/>
            <person name="Momen B."/>
            <person name="Melamud E."/>
            <person name="Zhang X."/>
            <person name="Moult J."/>
            <person name="Madupu R."/>
            <person name="Nelson W.C."/>
            <person name="Dodson R.J."/>
            <person name="Brinkac L.M."/>
            <person name="Daugherty S.C."/>
            <person name="Durkin A.S."/>
            <person name="DeBoy R.T."/>
            <person name="Kolonay J.F."/>
            <person name="Sullivan S.A."/>
            <person name="Zhou L."/>
            <person name="Davidsen T.M."/>
            <person name="Wu M."/>
            <person name="Huston A.L."/>
            <person name="Lewis M."/>
            <person name="Weaver B."/>
            <person name="Weidman J.F."/>
            <person name="Khouri H."/>
            <person name="Utterback T.R."/>
            <person name="Feldblyum T.V."/>
            <person name="Fraser C.M."/>
        </authorList>
    </citation>
    <scope>NUCLEOTIDE SEQUENCE [LARGE SCALE GENOMIC DNA]</scope>
    <source>
        <strain>34H / ATCC BAA-681</strain>
    </source>
</reference>
<keyword id="KW-0028">Amino-acid biosynthesis</keyword>
<keyword id="KW-0055">Arginine biosynthesis</keyword>
<keyword id="KW-0067">ATP-binding</keyword>
<keyword id="KW-0963">Cytoplasm</keyword>
<keyword id="KW-0436">Ligase</keyword>
<keyword id="KW-0547">Nucleotide-binding</keyword>
<name>ASSY_COLP3</name>
<evidence type="ECO:0000255" key="1">
    <source>
        <dbReference type="HAMAP-Rule" id="MF_00005"/>
    </source>
</evidence>
<organism>
    <name type="scientific">Colwellia psychrerythraea (strain 34H / ATCC BAA-681)</name>
    <name type="common">Vibrio psychroerythus</name>
    <dbReference type="NCBI Taxonomy" id="167879"/>
    <lineage>
        <taxon>Bacteria</taxon>
        <taxon>Pseudomonadati</taxon>
        <taxon>Pseudomonadota</taxon>
        <taxon>Gammaproteobacteria</taxon>
        <taxon>Alteromonadales</taxon>
        <taxon>Colwelliaceae</taxon>
        <taxon>Colwellia</taxon>
    </lineage>
</organism>
<protein>
    <recommendedName>
        <fullName evidence="1">Argininosuccinate synthase</fullName>
        <ecNumber evidence="1">6.3.4.5</ecNumber>
    </recommendedName>
    <alternativeName>
        <fullName evidence="1">Citrulline--aspartate ligase</fullName>
    </alternativeName>
</protein>
<feature type="chain" id="PRO_0000263915" description="Argininosuccinate synthase">
    <location>
        <begin position="1"/>
        <end position="418"/>
    </location>
</feature>
<feature type="binding site" evidence="1">
    <location>
        <begin position="14"/>
        <end position="22"/>
    </location>
    <ligand>
        <name>ATP</name>
        <dbReference type="ChEBI" id="CHEBI:30616"/>
    </ligand>
</feature>
<feature type="binding site" evidence="1">
    <location>
        <position position="42"/>
    </location>
    <ligand>
        <name>ATP</name>
        <dbReference type="ChEBI" id="CHEBI:30616"/>
    </ligand>
</feature>
<feature type="binding site" evidence="1">
    <location>
        <position position="94"/>
    </location>
    <ligand>
        <name>L-citrulline</name>
        <dbReference type="ChEBI" id="CHEBI:57743"/>
    </ligand>
</feature>
<feature type="binding site" evidence="1">
    <location>
        <position position="99"/>
    </location>
    <ligand>
        <name>L-citrulline</name>
        <dbReference type="ChEBI" id="CHEBI:57743"/>
    </ligand>
</feature>
<feature type="binding site" evidence="1">
    <location>
        <position position="124"/>
    </location>
    <ligand>
        <name>ATP</name>
        <dbReference type="ChEBI" id="CHEBI:30616"/>
    </ligand>
</feature>
<feature type="binding site" evidence="1">
    <location>
        <position position="126"/>
    </location>
    <ligand>
        <name>L-aspartate</name>
        <dbReference type="ChEBI" id="CHEBI:29991"/>
    </ligand>
</feature>
<feature type="binding site" evidence="1">
    <location>
        <position position="130"/>
    </location>
    <ligand>
        <name>L-aspartate</name>
        <dbReference type="ChEBI" id="CHEBI:29991"/>
    </ligand>
</feature>
<feature type="binding site" evidence="1">
    <location>
        <position position="130"/>
    </location>
    <ligand>
        <name>L-citrulline</name>
        <dbReference type="ChEBI" id="CHEBI:57743"/>
    </ligand>
</feature>
<feature type="binding site" evidence="1">
    <location>
        <position position="131"/>
    </location>
    <ligand>
        <name>L-aspartate</name>
        <dbReference type="ChEBI" id="CHEBI:29991"/>
    </ligand>
</feature>
<feature type="binding site" evidence="1">
    <location>
        <position position="134"/>
    </location>
    <ligand>
        <name>L-citrulline</name>
        <dbReference type="ChEBI" id="CHEBI:57743"/>
    </ligand>
</feature>
<feature type="binding site" evidence="1">
    <location>
        <position position="183"/>
    </location>
    <ligand>
        <name>L-citrulline</name>
        <dbReference type="ChEBI" id="CHEBI:57743"/>
    </ligand>
</feature>
<feature type="binding site" evidence="1">
    <location>
        <position position="192"/>
    </location>
    <ligand>
        <name>L-citrulline</name>
        <dbReference type="ChEBI" id="CHEBI:57743"/>
    </ligand>
</feature>
<feature type="binding site" evidence="1">
    <location>
        <position position="273"/>
    </location>
    <ligand>
        <name>L-citrulline</name>
        <dbReference type="ChEBI" id="CHEBI:57743"/>
    </ligand>
</feature>
<feature type="binding site" evidence="1">
    <location>
        <position position="285"/>
    </location>
    <ligand>
        <name>L-citrulline</name>
        <dbReference type="ChEBI" id="CHEBI:57743"/>
    </ligand>
</feature>
<gene>
    <name evidence="1" type="primary">argG</name>
    <name type="ordered locus">CPS_0463</name>
</gene>